<keyword id="KW-0963">Cytoplasm</keyword>
<keyword id="KW-0251">Elongation factor</keyword>
<keyword id="KW-0648">Protein biosynthesis</keyword>
<keyword id="KW-1185">Reference proteome</keyword>
<gene>
    <name evidence="1" type="primary">efp</name>
    <name type="ordered locus">CBO1897</name>
    <name type="ordered locus">CLC_1841</name>
</gene>
<accession>A5I321</accession>
<accession>A7G4I1</accession>
<reference key="1">
    <citation type="journal article" date="2007" name="Genome Res.">
        <title>Genome sequence of a proteolytic (Group I) Clostridium botulinum strain Hall A and comparative analysis of the clostridial genomes.</title>
        <authorList>
            <person name="Sebaihia M."/>
            <person name="Peck M.W."/>
            <person name="Minton N.P."/>
            <person name="Thomson N.R."/>
            <person name="Holden M.T.G."/>
            <person name="Mitchell W.J."/>
            <person name="Carter A.T."/>
            <person name="Bentley S.D."/>
            <person name="Mason D.R."/>
            <person name="Crossman L."/>
            <person name="Paul C.J."/>
            <person name="Ivens A."/>
            <person name="Wells-Bennik M.H.J."/>
            <person name="Davis I.J."/>
            <person name="Cerdeno-Tarraga A.M."/>
            <person name="Churcher C."/>
            <person name="Quail M.A."/>
            <person name="Chillingworth T."/>
            <person name="Feltwell T."/>
            <person name="Fraser A."/>
            <person name="Goodhead I."/>
            <person name="Hance Z."/>
            <person name="Jagels K."/>
            <person name="Larke N."/>
            <person name="Maddison M."/>
            <person name="Moule S."/>
            <person name="Mungall K."/>
            <person name="Norbertczak H."/>
            <person name="Rabbinowitsch E."/>
            <person name="Sanders M."/>
            <person name="Simmonds M."/>
            <person name="White B."/>
            <person name="Whithead S."/>
            <person name="Parkhill J."/>
        </authorList>
    </citation>
    <scope>NUCLEOTIDE SEQUENCE [LARGE SCALE GENOMIC DNA]</scope>
    <source>
        <strain>Hall / ATCC 3502 / NCTC 13319 / Type A</strain>
    </source>
</reference>
<reference key="2">
    <citation type="journal article" date="2007" name="PLoS ONE">
        <title>Analysis of the neurotoxin complex genes in Clostridium botulinum A1-A4 and B1 strains: BoNT/A3, /Ba4 and /B1 clusters are located within plasmids.</title>
        <authorList>
            <person name="Smith T.J."/>
            <person name="Hill K.K."/>
            <person name="Foley B.T."/>
            <person name="Detter J.C."/>
            <person name="Munk A.C."/>
            <person name="Bruce D.C."/>
            <person name="Doggett N.A."/>
            <person name="Smith L.A."/>
            <person name="Marks J.D."/>
            <person name="Xie G."/>
            <person name="Brettin T.S."/>
        </authorList>
    </citation>
    <scope>NUCLEOTIDE SEQUENCE [LARGE SCALE GENOMIC DNA]</scope>
    <source>
        <strain>Hall / ATCC 3502 / NCTC 13319 / Type A</strain>
    </source>
</reference>
<sequence>MISAGDLRKGTTFEQDGQVYVVVEFLHVKPGKGAAFVRTKLKNAITGAVTETTFNPTAKLQEAVIERKEMQYLYTDGELYYFMDQETFEQIPLNYDKVEEAIKFLKENMFATIKFFKGEAFSVEAPNFVELLISHTEPGAKGNTTSNVMKPATLETGATIQVPLFVNEGETIRVDTRTGEYMERV</sequence>
<organism>
    <name type="scientific">Clostridium botulinum (strain Hall / ATCC 3502 / NCTC 13319 / Type A)</name>
    <dbReference type="NCBI Taxonomy" id="441771"/>
    <lineage>
        <taxon>Bacteria</taxon>
        <taxon>Bacillati</taxon>
        <taxon>Bacillota</taxon>
        <taxon>Clostridia</taxon>
        <taxon>Eubacteriales</taxon>
        <taxon>Clostridiaceae</taxon>
        <taxon>Clostridium</taxon>
    </lineage>
</organism>
<proteinExistence type="inferred from homology"/>
<comment type="function">
    <text evidence="1">Involved in peptide bond synthesis. Stimulates efficient translation and peptide-bond synthesis on native or reconstituted 70S ribosomes in vitro. Probably functions indirectly by altering the affinity of the ribosome for aminoacyl-tRNA, thus increasing their reactivity as acceptors for peptidyl transferase.</text>
</comment>
<comment type="pathway">
    <text evidence="1">Protein biosynthesis; polypeptide chain elongation.</text>
</comment>
<comment type="subcellular location">
    <subcellularLocation>
        <location evidence="1">Cytoplasm</location>
    </subcellularLocation>
</comment>
<comment type="similarity">
    <text evidence="1">Belongs to the elongation factor P family.</text>
</comment>
<feature type="chain" id="PRO_1000010718" description="Elongation factor P">
    <location>
        <begin position="1"/>
        <end position="185"/>
    </location>
</feature>
<dbReference type="EMBL" id="CP000727">
    <property type="protein sequence ID" value="ABS36560.1"/>
    <property type="molecule type" value="Genomic_DNA"/>
</dbReference>
<dbReference type="EMBL" id="AM412317">
    <property type="protein sequence ID" value="CAL83438.1"/>
    <property type="molecule type" value="Genomic_DNA"/>
</dbReference>
<dbReference type="RefSeq" id="WP_003358905.1">
    <property type="nucleotide sequence ID" value="NC_009698.1"/>
</dbReference>
<dbReference type="RefSeq" id="YP_001254399.1">
    <property type="nucleotide sequence ID" value="NC_009495.1"/>
</dbReference>
<dbReference type="RefSeq" id="YP_001387696.1">
    <property type="nucleotide sequence ID" value="NC_009698.1"/>
</dbReference>
<dbReference type="SMR" id="A5I321"/>
<dbReference type="GeneID" id="5186152"/>
<dbReference type="KEGG" id="cbh:CLC_1841"/>
<dbReference type="KEGG" id="cbo:CBO1897"/>
<dbReference type="PATRIC" id="fig|413999.7.peg.1869"/>
<dbReference type="HOGENOM" id="CLU_074944_0_1_9"/>
<dbReference type="UniPathway" id="UPA00345"/>
<dbReference type="PRO" id="PR:A5I321"/>
<dbReference type="Proteomes" id="UP000001986">
    <property type="component" value="Chromosome"/>
</dbReference>
<dbReference type="GO" id="GO:0005737">
    <property type="term" value="C:cytoplasm"/>
    <property type="evidence" value="ECO:0000318"/>
    <property type="project" value="GO_Central"/>
</dbReference>
<dbReference type="GO" id="GO:0003746">
    <property type="term" value="F:translation elongation factor activity"/>
    <property type="evidence" value="ECO:0000318"/>
    <property type="project" value="GO_Central"/>
</dbReference>
<dbReference type="GO" id="GO:0043043">
    <property type="term" value="P:peptide biosynthetic process"/>
    <property type="evidence" value="ECO:0007669"/>
    <property type="project" value="InterPro"/>
</dbReference>
<dbReference type="CDD" id="cd04470">
    <property type="entry name" value="S1_EF-P_repeat_1"/>
    <property type="match status" value="1"/>
</dbReference>
<dbReference type="CDD" id="cd05794">
    <property type="entry name" value="S1_EF-P_repeat_2"/>
    <property type="match status" value="1"/>
</dbReference>
<dbReference type="FunFam" id="2.30.30.30:FF:000003">
    <property type="entry name" value="Elongation factor P"/>
    <property type="match status" value="1"/>
</dbReference>
<dbReference type="FunFam" id="2.40.50.140:FF:000004">
    <property type="entry name" value="Elongation factor P"/>
    <property type="match status" value="1"/>
</dbReference>
<dbReference type="FunFam" id="2.40.50.140:FF:000009">
    <property type="entry name" value="Elongation factor P"/>
    <property type="match status" value="1"/>
</dbReference>
<dbReference type="Gene3D" id="2.30.30.30">
    <property type="match status" value="1"/>
</dbReference>
<dbReference type="Gene3D" id="2.40.50.140">
    <property type="entry name" value="Nucleic acid-binding proteins"/>
    <property type="match status" value="2"/>
</dbReference>
<dbReference type="HAMAP" id="MF_00141">
    <property type="entry name" value="EF_P"/>
    <property type="match status" value="1"/>
</dbReference>
<dbReference type="InterPro" id="IPR015365">
    <property type="entry name" value="Elong-fact-P_C"/>
</dbReference>
<dbReference type="InterPro" id="IPR012340">
    <property type="entry name" value="NA-bd_OB-fold"/>
</dbReference>
<dbReference type="InterPro" id="IPR014722">
    <property type="entry name" value="Rib_uL2_dom2"/>
</dbReference>
<dbReference type="InterPro" id="IPR020599">
    <property type="entry name" value="Transl_elong_fac_P/YeiP"/>
</dbReference>
<dbReference type="InterPro" id="IPR013185">
    <property type="entry name" value="Transl_elong_KOW-like"/>
</dbReference>
<dbReference type="InterPro" id="IPR001059">
    <property type="entry name" value="Transl_elong_P/YeiP_cen"/>
</dbReference>
<dbReference type="InterPro" id="IPR013852">
    <property type="entry name" value="Transl_elong_P/YeiP_CS"/>
</dbReference>
<dbReference type="InterPro" id="IPR011768">
    <property type="entry name" value="Transl_elongation_fac_P"/>
</dbReference>
<dbReference type="InterPro" id="IPR008991">
    <property type="entry name" value="Translation_prot_SH3-like_sf"/>
</dbReference>
<dbReference type="NCBIfam" id="TIGR00038">
    <property type="entry name" value="efp"/>
    <property type="match status" value="1"/>
</dbReference>
<dbReference type="NCBIfam" id="NF001810">
    <property type="entry name" value="PRK00529.1"/>
    <property type="match status" value="1"/>
</dbReference>
<dbReference type="PANTHER" id="PTHR30053">
    <property type="entry name" value="ELONGATION FACTOR P"/>
    <property type="match status" value="1"/>
</dbReference>
<dbReference type="PANTHER" id="PTHR30053:SF12">
    <property type="entry name" value="ELONGATION FACTOR P (EF-P) FAMILY PROTEIN"/>
    <property type="match status" value="1"/>
</dbReference>
<dbReference type="Pfam" id="PF01132">
    <property type="entry name" value="EFP"/>
    <property type="match status" value="1"/>
</dbReference>
<dbReference type="Pfam" id="PF08207">
    <property type="entry name" value="EFP_N"/>
    <property type="match status" value="1"/>
</dbReference>
<dbReference type="Pfam" id="PF09285">
    <property type="entry name" value="Elong-fact-P_C"/>
    <property type="match status" value="1"/>
</dbReference>
<dbReference type="PIRSF" id="PIRSF005901">
    <property type="entry name" value="EF-P"/>
    <property type="match status" value="1"/>
</dbReference>
<dbReference type="SMART" id="SM01185">
    <property type="entry name" value="EFP"/>
    <property type="match status" value="1"/>
</dbReference>
<dbReference type="SMART" id="SM00841">
    <property type="entry name" value="Elong-fact-P_C"/>
    <property type="match status" value="1"/>
</dbReference>
<dbReference type="SUPFAM" id="SSF50249">
    <property type="entry name" value="Nucleic acid-binding proteins"/>
    <property type="match status" value="2"/>
</dbReference>
<dbReference type="SUPFAM" id="SSF50104">
    <property type="entry name" value="Translation proteins SH3-like domain"/>
    <property type="match status" value="1"/>
</dbReference>
<dbReference type="PROSITE" id="PS01275">
    <property type="entry name" value="EFP"/>
    <property type="match status" value="1"/>
</dbReference>
<evidence type="ECO:0000255" key="1">
    <source>
        <dbReference type="HAMAP-Rule" id="MF_00141"/>
    </source>
</evidence>
<protein>
    <recommendedName>
        <fullName evidence="1">Elongation factor P</fullName>
        <shortName evidence="1">EF-P</shortName>
    </recommendedName>
</protein>
<name>EFP_CLOBH</name>